<evidence type="ECO:0000250" key="1"/>
<evidence type="ECO:0000256" key="2">
    <source>
        <dbReference type="SAM" id="MobiDB-lite"/>
    </source>
</evidence>
<evidence type="ECO:0000305" key="3"/>
<proteinExistence type="inferred from homology"/>
<gene>
    <name type="primary">His2A</name>
</gene>
<name>H2A_TIGCA</name>
<sequence>MSGRGKGGKVKGKAKSRSNRAGLQFPVGRIHRLLRKGNYAERVGAGAPVYLAAVMEYLAAEVLELAGNAARDNKKTRIIPRHLQLAIRNDEELNKLLSGVTIAQGGVLPNIQAVLLPKKTEKKA</sequence>
<protein>
    <recommendedName>
        <fullName>Histone H2A</fullName>
    </recommendedName>
</protein>
<accession>P84057</accession>
<accession>P02267</accession>
<reference key="1">
    <citation type="journal article" date="1992" name="DNA Seq.">
        <title>Closely linked H2B genes in the marine copepod, Tigriopus californicus indicate a recent gene duplication or gene conversion event.</title>
        <authorList>
            <person name="Brown D."/>
            <person name="Cook A."/>
            <person name="Wagner M."/>
            <person name="Wells D."/>
        </authorList>
    </citation>
    <scope>NUCLEOTIDE SEQUENCE [GENOMIC DNA]</scope>
</reference>
<comment type="function">
    <text>Core component of nucleosome. Nucleosomes wrap and compact DNA into chromatin, limiting DNA accessibility to the cellular machineries which require DNA as a template. Histones thereby play a central role in transcription regulation, DNA repair, DNA replication and chromosomal stability. DNA accessibility is regulated via a complex set of post-translational modifications of histones, also called histone code, and nucleosome remodeling.</text>
</comment>
<comment type="subunit">
    <text>The nucleosome is a histone octamer containing two molecules each of H2A, H2B, H3 and H4 assembled in one H3-H4 heterotetramer and two H2A-H2B heterodimers. The octamer wraps approximately 147 bp of DNA.</text>
</comment>
<comment type="subcellular location">
    <subcellularLocation>
        <location>Nucleus</location>
    </subcellularLocation>
    <subcellularLocation>
        <location>Chromosome</location>
    </subcellularLocation>
</comment>
<comment type="PTM">
    <text evidence="1">Monoubiquitination of Lys-119 gives a specific tag for epigenetic transcriptional repression.</text>
</comment>
<comment type="PTM">
    <text evidence="1">Phosphorylation on Ser-2 is enhanced during mitosis. Phosphorylation on Ser-2 directly represses transcription (By similarity).</text>
</comment>
<comment type="similarity">
    <text evidence="3">Belongs to the histone H2A family.</text>
</comment>
<keyword id="KW-0007">Acetylation</keyword>
<keyword id="KW-0158">Chromosome</keyword>
<keyword id="KW-0238">DNA-binding</keyword>
<keyword id="KW-1017">Isopeptide bond</keyword>
<keyword id="KW-0488">Methylation</keyword>
<keyword id="KW-0544">Nucleosome core</keyword>
<keyword id="KW-0539">Nucleus</keyword>
<keyword id="KW-0597">Phosphoprotein</keyword>
<keyword id="KW-0832">Ubl conjugation</keyword>
<feature type="initiator methionine" description="Removed" evidence="1">
    <location>
        <position position="1"/>
    </location>
</feature>
<feature type="chain" id="PRO_0000055226" description="Histone H2A">
    <location>
        <begin position="2"/>
        <end position="124"/>
    </location>
</feature>
<feature type="region of interest" description="Disordered" evidence="2">
    <location>
        <begin position="1"/>
        <end position="21"/>
    </location>
</feature>
<feature type="compositionally biased region" description="Basic residues" evidence="2">
    <location>
        <begin position="1"/>
        <end position="18"/>
    </location>
</feature>
<feature type="modified residue" description="N-acetylserine" evidence="1">
    <location>
        <position position="2"/>
    </location>
</feature>
<feature type="modified residue" description="Phosphoserine" evidence="1">
    <location>
        <position position="2"/>
    </location>
</feature>
<feature type="modified residue" description="N5-methylglutamine" evidence="1">
    <location>
        <position position="104"/>
    </location>
</feature>
<feature type="cross-link" description="Glycyl lysine isopeptide (Lys-Gly) (interchain with G-Cter in ubiquitin)" evidence="1">
    <location>
        <position position="119"/>
    </location>
</feature>
<dbReference type="EMBL" id="S49144">
    <property type="protein sequence ID" value="AAA12278.1"/>
    <property type="molecule type" value="Genomic_DNA"/>
</dbReference>
<dbReference type="EMBL" id="M84797">
    <property type="protein sequence ID" value="AAC41555.1"/>
    <property type="molecule type" value="Genomic_DNA"/>
</dbReference>
<dbReference type="PIR" id="C56612">
    <property type="entry name" value="C56612"/>
</dbReference>
<dbReference type="SMR" id="P84057"/>
<dbReference type="EnsemblMetazoa" id="TCAL_03264-PA_mrna">
    <property type="protein sequence ID" value="TRY68716.1"/>
    <property type="gene ID" value="TCAL_03264"/>
</dbReference>
<dbReference type="EnsemblMetazoa" id="TCAL_07217-PA_mrna">
    <property type="protein sequence ID" value="TRY67727.1"/>
    <property type="gene ID" value="TCAL_07217"/>
</dbReference>
<dbReference type="EnsemblMetazoa" id="TCAL_12413-PA_mrna">
    <property type="protein sequence ID" value="TRY78826.1"/>
    <property type="gene ID" value="TCAL_12413"/>
</dbReference>
<dbReference type="EnsemblMetazoa" id="TCAL_12418-PA_mrna">
    <property type="protein sequence ID" value="TRY78830.1"/>
    <property type="gene ID" value="TCAL_12418"/>
</dbReference>
<dbReference type="EnsemblMetazoa" id="TCAL_12920-PA_mrna">
    <property type="protein sequence ID" value="TRY77834.1"/>
    <property type="gene ID" value="TCAL_12920"/>
</dbReference>
<dbReference type="EnsemblMetazoa" id="TCAL_13516-PA_mrna">
    <property type="protein sequence ID" value="TRY69112.1"/>
    <property type="gene ID" value="TCAL_13516"/>
</dbReference>
<dbReference type="OMA" id="RRNICHA"/>
<dbReference type="OrthoDB" id="6351678at2759"/>
<dbReference type="GO" id="GO:0000786">
    <property type="term" value="C:nucleosome"/>
    <property type="evidence" value="ECO:0007669"/>
    <property type="project" value="UniProtKB-KW"/>
</dbReference>
<dbReference type="GO" id="GO:0005634">
    <property type="term" value="C:nucleus"/>
    <property type="evidence" value="ECO:0007669"/>
    <property type="project" value="UniProtKB-SubCell"/>
</dbReference>
<dbReference type="GO" id="GO:0003677">
    <property type="term" value="F:DNA binding"/>
    <property type="evidence" value="ECO:0007669"/>
    <property type="project" value="UniProtKB-KW"/>
</dbReference>
<dbReference type="GO" id="GO:0046982">
    <property type="term" value="F:protein heterodimerization activity"/>
    <property type="evidence" value="ECO:0007669"/>
    <property type="project" value="InterPro"/>
</dbReference>
<dbReference type="GO" id="GO:0030527">
    <property type="term" value="F:structural constituent of chromatin"/>
    <property type="evidence" value="ECO:0007669"/>
    <property type="project" value="InterPro"/>
</dbReference>
<dbReference type="CDD" id="cd00074">
    <property type="entry name" value="HFD_H2A"/>
    <property type="match status" value="1"/>
</dbReference>
<dbReference type="FunFam" id="1.10.20.10:FF:000173">
    <property type="entry name" value="Histone H2A"/>
    <property type="match status" value="1"/>
</dbReference>
<dbReference type="Gene3D" id="1.10.20.10">
    <property type="entry name" value="Histone, subunit A"/>
    <property type="match status" value="1"/>
</dbReference>
<dbReference type="InterPro" id="IPR009072">
    <property type="entry name" value="Histone-fold"/>
</dbReference>
<dbReference type="InterPro" id="IPR002119">
    <property type="entry name" value="Histone_H2A"/>
</dbReference>
<dbReference type="InterPro" id="IPR007125">
    <property type="entry name" value="Histone_H2A/H2B/H3"/>
</dbReference>
<dbReference type="InterPro" id="IPR032454">
    <property type="entry name" value="Histone_H2A_C"/>
</dbReference>
<dbReference type="InterPro" id="IPR032458">
    <property type="entry name" value="Histone_H2A_CS"/>
</dbReference>
<dbReference type="PANTHER" id="PTHR23430">
    <property type="entry name" value="HISTONE H2A"/>
    <property type="match status" value="1"/>
</dbReference>
<dbReference type="Pfam" id="PF00125">
    <property type="entry name" value="Histone"/>
    <property type="match status" value="1"/>
</dbReference>
<dbReference type="Pfam" id="PF16211">
    <property type="entry name" value="Histone_H2A_C"/>
    <property type="match status" value="1"/>
</dbReference>
<dbReference type="PRINTS" id="PR00620">
    <property type="entry name" value="HISTONEH2A"/>
</dbReference>
<dbReference type="SMART" id="SM00414">
    <property type="entry name" value="H2A"/>
    <property type="match status" value="1"/>
</dbReference>
<dbReference type="SUPFAM" id="SSF47113">
    <property type="entry name" value="Histone-fold"/>
    <property type="match status" value="1"/>
</dbReference>
<dbReference type="PROSITE" id="PS00046">
    <property type="entry name" value="HISTONE_H2A"/>
    <property type="match status" value="1"/>
</dbReference>
<organism>
    <name type="scientific">Tigriopus californicus</name>
    <name type="common">Marine copepod</name>
    <dbReference type="NCBI Taxonomy" id="6832"/>
    <lineage>
        <taxon>Eukaryota</taxon>
        <taxon>Metazoa</taxon>
        <taxon>Ecdysozoa</taxon>
        <taxon>Arthropoda</taxon>
        <taxon>Crustacea</taxon>
        <taxon>Multicrustacea</taxon>
        <taxon>Hexanauplia</taxon>
        <taxon>Copepoda</taxon>
        <taxon>Harpacticoida</taxon>
        <taxon>Harpacticidae</taxon>
        <taxon>Tigriopus</taxon>
    </lineage>
</organism>